<evidence type="ECO:0000255" key="1">
    <source>
        <dbReference type="HAMAP-Rule" id="MF_01347"/>
    </source>
</evidence>
<name>ATPB_SALHS</name>
<keyword id="KW-0066">ATP synthesis</keyword>
<keyword id="KW-0067">ATP-binding</keyword>
<keyword id="KW-0997">Cell inner membrane</keyword>
<keyword id="KW-1003">Cell membrane</keyword>
<keyword id="KW-0139">CF(1)</keyword>
<keyword id="KW-0375">Hydrogen ion transport</keyword>
<keyword id="KW-0406">Ion transport</keyword>
<keyword id="KW-0472">Membrane</keyword>
<keyword id="KW-0547">Nucleotide-binding</keyword>
<keyword id="KW-1278">Translocase</keyword>
<keyword id="KW-0813">Transport</keyword>
<feature type="chain" id="PRO_1000143541" description="ATP synthase subunit beta">
    <location>
        <begin position="1"/>
        <end position="460"/>
    </location>
</feature>
<feature type="binding site" evidence="1">
    <location>
        <begin position="150"/>
        <end position="157"/>
    </location>
    <ligand>
        <name>ATP</name>
        <dbReference type="ChEBI" id="CHEBI:30616"/>
    </ligand>
</feature>
<proteinExistence type="inferred from homology"/>
<protein>
    <recommendedName>
        <fullName evidence="1">ATP synthase subunit beta</fullName>
        <ecNumber evidence="1">7.1.2.2</ecNumber>
    </recommendedName>
    <alternativeName>
        <fullName evidence="1">ATP synthase F1 sector subunit beta</fullName>
    </alternativeName>
    <alternativeName>
        <fullName evidence="1">F-ATPase subunit beta</fullName>
    </alternativeName>
</protein>
<reference key="1">
    <citation type="journal article" date="2011" name="J. Bacteriol.">
        <title>Comparative genomics of 28 Salmonella enterica isolates: evidence for CRISPR-mediated adaptive sublineage evolution.</title>
        <authorList>
            <person name="Fricke W.F."/>
            <person name="Mammel M.K."/>
            <person name="McDermott P.F."/>
            <person name="Tartera C."/>
            <person name="White D.G."/>
            <person name="Leclerc J.E."/>
            <person name="Ravel J."/>
            <person name="Cebula T.A."/>
        </authorList>
    </citation>
    <scope>NUCLEOTIDE SEQUENCE [LARGE SCALE GENOMIC DNA]</scope>
    <source>
        <strain>SL476</strain>
    </source>
</reference>
<comment type="function">
    <text evidence="1">Produces ATP from ADP in the presence of a proton gradient across the membrane. The catalytic sites are hosted primarily by the beta subunits.</text>
</comment>
<comment type="catalytic activity">
    <reaction evidence="1">
        <text>ATP + H2O + 4 H(+)(in) = ADP + phosphate + 5 H(+)(out)</text>
        <dbReference type="Rhea" id="RHEA:57720"/>
        <dbReference type="ChEBI" id="CHEBI:15377"/>
        <dbReference type="ChEBI" id="CHEBI:15378"/>
        <dbReference type="ChEBI" id="CHEBI:30616"/>
        <dbReference type="ChEBI" id="CHEBI:43474"/>
        <dbReference type="ChEBI" id="CHEBI:456216"/>
        <dbReference type="EC" id="7.1.2.2"/>
    </reaction>
</comment>
<comment type="subunit">
    <text evidence="1">F-type ATPases have 2 components, CF(1) - the catalytic core - and CF(0) - the membrane proton channel. CF(1) has five subunits: alpha(3), beta(3), gamma(1), delta(1), epsilon(1). CF(0) has three main subunits: a(1), b(2) and c(9-12). The alpha and beta chains form an alternating ring which encloses part of the gamma chain. CF(1) is attached to CF(0) by a central stalk formed by the gamma and epsilon chains, while a peripheral stalk is formed by the delta and b chains.</text>
</comment>
<comment type="subcellular location">
    <subcellularLocation>
        <location evidence="1">Cell inner membrane</location>
        <topology evidence="1">Peripheral membrane protein</topology>
    </subcellularLocation>
</comment>
<comment type="similarity">
    <text evidence="1">Belongs to the ATPase alpha/beta chains family.</text>
</comment>
<sequence length="460" mass="50283">MATGKIVQVIGAVVDVEFPQDAVPRVYDALEVQNGNEKLVLEVQQQLGGGIVRTIAMGSSDGLRRGLDVKDLEHPIEVPVGKATLGRIMNVLGEPVDMKGEIGEEERWAIHRAAPSYEELSNSQELLETGIKVIDLMCPFAKGGKVGLFGGAGVGKTVNMMELIRNIAIEHSGYSVFAGVGERTREGNDFYHEMTDSNVIDKVSLVYGQMNEPPGNRLRVALTGLTMAEKFRDEGRDVLLFVDNIYRYTLAGTEVSALLGRMPSAVGYQPTLAEEMGVLQERITSTKTGSITSVQAVYVPADDLTDPSPATTFAHLDATVVLSRQIASLGIYPAVDPLDSTSRQLDPLVVGQEHYDTARGVQSILQRYQELKDIIAILGMDELSEEDKLVVARARKIQRFLSQPFFVAEVFTGSPGKYVSLKDTIRGFKGIMEGEYDHLPEQAFYMVGSIDEAVEKAKKL</sequence>
<gene>
    <name evidence="1" type="primary">atpD</name>
    <name type="ordered locus">SeHA_C4196</name>
</gene>
<organism>
    <name type="scientific">Salmonella heidelberg (strain SL476)</name>
    <dbReference type="NCBI Taxonomy" id="454169"/>
    <lineage>
        <taxon>Bacteria</taxon>
        <taxon>Pseudomonadati</taxon>
        <taxon>Pseudomonadota</taxon>
        <taxon>Gammaproteobacteria</taxon>
        <taxon>Enterobacterales</taxon>
        <taxon>Enterobacteriaceae</taxon>
        <taxon>Salmonella</taxon>
    </lineage>
</organism>
<accession>B4TAX2</accession>
<dbReference type="EC" id="7.1.2.2" evidence="1"/>
<dbReference type="EMBL" id="CP001120">
    <property type="protein sequence ID" value="ACF68914.1"/>
    <property type="molecule type" value="Genomic_DNA"/>
</dbReference>
<dbReference type="RefSeq" id="WP_000190499.1">
    <property type="nucleotide sequence ID" value="NC_011083.1"/>
</dbReference>
<dbReference type="SMR" id="B4TAX2"/>
<dbReference type="GeneID" id="66758154"/>
<dbReference type="KEGG" id="seh:SeHA_C4196"/>
<dbReference type="HOGENOM" id="CLU_022398_0_2_6"/>
<dbReference type="Proteomes" id="UP000001866">
    <property type="component" value="Chromosome"/>
</dbReference>
<dbReference type="GO" id="GO:0005886">
    <property type="term" value="C:plasma membrane"/>
    <property type="evidence" value="ECO:0007669"/>
    <property type="project" value="UniProtKB-SubCell"/>
</dbReference>
<dbReference type="GO" id="GO:0045259">
    <property type="term" value="C:proton-transporting ATP synthase complex"/>
    <property type="evidence" value="ECO:0007669"/>
    <property type="project" value="UniProtKB-KW"/>
</dbReference>
<dbReference type="GO" id="GO:0005524">
    <property type="term" value="F:ATP binding"/>
    <property type="evidence" value="ECO:0007669"/>
    <property type="project" value="UniProtKB-UniRule"/>
</dbReference>
<dbReference type="GO" id="GO:0016887">
    <property type="term" value="F:ATP hydrolysis activity"/>
    <property type="evidence" value="ECO:0007669"/>
    <property type="project" value="InterPro"/>
</dbReference>
<dbReference type="GO" id="GO:0046933">
    <property type="term" value="F:proton-transporting ATP synthase activity, rotational mechanism"/>
    <property type="evidence" value="ECO:0007669"/>
    <property type="project" value="UniProtKB-UniRule"/>
</dbReference>
<dbReference type="CDD" id="cd18110">
    <property type="entry name" value="ATP-synt_F1_beta_C"/>
    <property type="match status" value="1"/>
</dbReference>
<dbReference type="CDD" id="cd18115">
    <property type="entry name" value="ATP-synt_F1_beta_N"/>
    <property type="match status" value="1"/>
</dbReference>
<dbReference type="CDD" id="cd01133">
    <property type="entry name" value="F1-ATPase_beta_CD"/>
    <property type="match status" value="1"/>
</dbReference>
<dbReference type="FunFam" id="1.10.1140.10:FF:000001">
    <property type="entry name" value="ATP synthase subunit beta"/>
    <property type="match status" value="1"/>
</dbReference>
<dbReference type="FunFam" id="2.40.10.170:FF:000003">
    <property type="entry name" value="ATP synthase subunit beta"/>
    <property type="match status" value="1"/>
</dbReference>
<dbReference type="FunFam" id="3.40.50.300:FF:000004">
    <property type="entry name" value="ATP synthase subunit beta"/>
    <property type="match status" value="1"/>
</dbReference>
<dbReference type="Gene3D" id="2.40.10.170">
    <property type="match status" value="1"/>
</dbReference>
<dbReference type="Gene3D" id="1.10.1140.10">
    <property type="entry name" value="Bovine Mitochondrial F1-atpase, Atp Synthase Beta Chain, Chain D, domain 3"/>
    <property type="match status" value="1"/>
</dbReference>
<dbReference type="Gene3D" id="3.40.50.300">
    <property type="entry name" value="P-loop containing nucleotide triphosphate hydrolases"/>
    <property type="match status" value="1"/>
</dbReference>
<dbReference type="HAMAP" id="MF_01347">
    <property type="entry name" value="ATP_synth_beta_bact"/>
    <property type="match status" value="1"/>
</dbReference>
<dbReference type="InterPro" id="IPR003593">
    <property type="entry name" value="AAA+_ATPase"/>
</dbReference>
<dbReference type="InterPro" id="IPR055190">
    <property type="entry name" value="ATP-synt_VA_C"/>
</dbReference>
<dbReference type="InterPro" id="IPR005722">
    <property type="entry name" value="ATP_synth_F1_bsu"/>
</dbReference>
<dbReference type="InterPro" id="IPR020003">
    <property type="entry name" value="ATPase_a/bsu_AS"/>
</dbReference>
<dbReference type="InterPro" id="IPR050053">
    <property type="entry name" value="ATPase_alpha/beta_chains"/>
</dbReference>
<dbReference type="InterPro" id="IPR004100">
    <property type="entry name" value="ATPase_F1/V1/A1_a/bsu_N"/>
</dbReference>
<dbReference type="InterPro" id="IPR036121">
    <property type="entry name" value="ATPase_F1/V1/A1_a/bsu_N_sf"/>
</dbReference>
<dbReference type="InterPro" id="IPR000194">
    <property type="entry name" value="ATPase_F1/V1/A1_a/bsu_nucl-bd"/>
</dbReference>
<dbReference type="InterPro" id="IPR024034">
    <property type="entry name" value="ATPase_F1/V1_b/a_C"/>
</dbReference>
<dbReference type="InterPro" id="IPR027417">
    <property type="entry name" value="P-loop_NTPase"/>
</dbReference>
<dbReference type="NCBIfam" id="TIGR01039">
    <property type="entry name" value="atpD"/>
    <property type="match status" value="1"/>
</dbReference>
<dbReference type="PANTHER" id="PTHR15184">
    <property type="entry name" value="ATP SYNTHASE"/>
    <property type="match status" value="1"/>
</dbReference>
<dbReference type="PANTHER" id="PTHR15184:SF71">
    <property type="entry name" value="ATP SYNTHASE SUBUNIT BETA, MITOCHONDRIAL"/>
    <property type="match status" value="1"/>
</dbReference>
<dbReference type="Pfam" id="PF00006">
    <property type="entry name" value="ATP-synt_ab"/>
    <property type="match status" value="1"/>
</dbReference>
<dbReference type="Pfam" id="PF02874">
    <property type="entry name" value="ATP-synt_ab_N"/>
    <property type="match status" value="1"/>
</dbReference>
<dbReference type="Pfam" id="PF22919">
    <property type="entry name" value="ATP-synt_VA_C"/>
    <property type="match status" value="1"/>
</dbReference>
<dbReference type="SMART" id="SM00382">
    <property type="entry name" value="AAA"/>
    <property type="match status" value="1"/>
</dbReference>
<dbReference type="SUPFAM" id="SSF47917">
    <property type="entry name" value="C-terminal domain of alpha and beta subunits of F1 ATP synthase"/>
    <property type="match status" value="1"/>
</dbReference>
<dbReference type="SUPFAM" id="SSF50615">
    <property type="entry name" value="N-terminal domain of alpha and beta subunits of F1 ATP synthase"/>
    <property type="match status" value="1"/>
</dbReference>
<dbReference type="SUPFAM" id="SSF52540">
    <property type="entry name" value="P-loop containing nucleoside triphosphate hydrolases"/>
    <property type="match status" value="1"/>
</dbReference>
<dbReference type="PROSITE" id="PS00152">
    <property type="entry name" value="ATPASE_ALPHA_BETA"/>
    <property type="match status" value="1"/>
</dbReference>